<proteinExistence type="inferred from homology"/>
<gene>
    <name evidence="1" type="primary">ihfB</name>
    <name evidence="1" type="synonym">himD</name>
    <name type="ordered locus">NE1961</name>
</gene>
<feature type="chain" id="PRO_1000122223" description="Integration host factor subunit beta">
    <location>
        <begin position="1"/>
        <end position="105"/>
    </location>
</feature>
<reference key="1">
    <citation type="journal article" date="2003" name="J. Bacteriol.">
        <title>Complete genome sequence of the ammonia-oxidizing bacterium and obligate chemolithoautotroph Nitrosomonas europaea.</title>
        <authorList>
            <person name="Chain P."/>
            <person name="Lamerdin J.E."/>
            <person name="Larimer F.W."/>
            <person name="Regala W."/>
            <person name="Lao V."/>
            <person name="Land M.L."/>
            <person name="Hauser L."/>
            <person name="Hooper A.B."/>
            <person name="Klotz M.G."/>
            <person name="Norton J."/>
            <person name="Sayavedra-Soto L.A."/>
            <person name="Arciero D.M."/>
            <person name="Hommes N.G."/>
            <person name="Whittaker M.M."/>
            <person name="Arp D.J."/>
        </authorList>
    </citation>
    <scope>NUCLEOTIDE SEQUENCE [LARGE SCALE GENOMIC DNA]</scope>
    <source>
        <strain>ATCC 19718 / CIP 103999 / KCTC 2705 / NBRC 14298</strain>
    </source>
</reference>
<name>IHFB_NITEU</name>
<sequence length="105" mass="11871">MTKSELISKLAERFPQLLAKDAELVVKIILDAMAKSLSRGERIEIRGFGSFDLNYRPSRVGRNPKSGEKVHVPEKYVPHFKAGKKMRELIDSGPKQHKVLDRVTG</sequence>
<organism>
    <name type="scientific">Nitrosomonas europaea (strain ATCC 19718 / CIP 103999 / KCTC 2705 / NBRC 14298)</name>
    <dbReference type="NCBI Taxonomy" id="228410"/>
    <lineage>
        <taxon>Bacteria</taxon>
        <taxon>Pseudomonadati</taxon>
        <taxon>Pseudomonadota</taxon>
        <taxon>Betaproteobacteria</taxon>
        <taxon>Nitrosomonadales</taxon>
        <taxon>Nitrosomonadaceae</taxon>
        <taxon>Nitrosomonas</taxon>
    </lineage>
</organism>
<protein>
    <recommendedName>
        <fullName evidence="1">Integration host factor subunit beta</fullName>
        <shortName evidence="1">IHF-beta</shortName>
    </recommendedName>
</protein>
<keyword id="KW-0233">DNA recombination</keyword>
<keyword id="KW-0238">DNA-binding</keyword>
<keyword id="KW-1185">Reference proteome</keyword>
<keyword id="KW-0804">Transcription</keyword>
<keyword id="KW-0805">Transcription regulation</keyword>
<keyword id="KW-0810">Translation regulation</keyword>
<accession>Q82TD7</accession>
<comment type="function">
    <text evidence="1">This protein is one of the two subunits of integration host factor, a specific DNA-binding protein that functions in genetic recombination as well as in transcriptional and translational control.</text>
</comment>
<comment type="subunit">
    <text evidence="1">Heterodimer of an alpha and a beta chain.</text>
</comment>
<comment type="similarity">
    <text evidence="1">Belongs to the bacterial histone-like protein family.</text>
</comment>
<dbReference type="EMBL" id="AL954747">
    <property type="protein sequence ID" value="CAD85872.1"/>
    <property type="molecule type" value="Genomic_DNA"/>
</dbReference>
<dbReference type="RefSeq" id="WP_011112492.1">
    <property type="nucleotide sequence ID" value="NC_004757.1"/>
</dbReference>
<dbReference type="SMR" id="Q82TD7"/>
<dbReference type="STRING" id="228410.NE1961"/>
<dbReference type="GeneID" id="87105114"/>
<dbReference type="KEGG" id="neu:NE1961"/>
<dbReference type="eggNOG" id="COG0776">
    <property type="taxonomic scope" value="Bacteria"/>
</dbReference>
<dbReference type="HOGENOM" id="CLU_105066_2_0_4"/>
<dbReference type="OrthoDB" id="9804203at2"/>
<dbReference type="PhylomeDB" id="Q82TD7"/>
<dbReference type="Proteomes" id="UP000001416">
    <property type="component" value="Chromosome"/>
</dbReference>
<dbReference type="GO" id="GO:0005694">
    <property type="term" value="C:chromosome"/>
    <property type="evidence" value="ECO:0007669"/>
    <property type="project" value="InterPro"/>
</dbReference>
<dbReference type="GO" id="GO:0005829">
    <property type="term" value="C:cytosol"/>
    <property type="evidence" value="ECO:0007669"/>
    <property type="project" value="TreeGrafter"/>
</dbReference>
<dbReference type="GO" id="GO:0003677">
    <property type="term" value="F:DNA binding"/>
    <property type="evidence" value="ECO:0007669"/>
    <property type="project" value="UniProtKB-UniRule"/>
</dbReference>
<dbReference type="GO" id="GO:0030527">
    <property type="term" value="F:structural constituent of chromatin"/>
    <property type="evidence" value="ECO:0007669"/>
    <property type="project" value="InterPro"/>
</dbReference>
<dbReference type="GO" id="GO:0006310">
    <property type="term" value="P:DNA recombination"/>
    <property type="evidence" value="ECO:0007669"/>
    <property type="project" value="UniProtKB-UniRule"/>
</dbReference>
<dbReference type="GO" id="GO:0006355">
    <property type="term" value="P:regulation of DNA-templated transcription"/>
    <property type="evidence" value="ECO:0007669"/>
    <property type="project" value="UniProtKB-UniRule"/>
</dbReference>
<dbReference type="GO" id="GO:0006417">
    <property type="term" value="P:regulation of translation"/>
    <property type="evidence" value="ECO:0007669"/>
    <property type="project" value="UniProtKB-UniRule"/>
</dbReference>
<dbReference type="CDD" id="cd13836">
    <property type="entry name" value="IHF_B"/>
    <property type="match status" value="1"/>
</dbReference>
<dbReference type="Gene3D" id="4.10.520.10">
    <property type="entry name" value="IHF-like DNA-binding proteins"/>
    <property type="match status" value="1"/>
</dbReference>
<dbReference type="HAMAP" id="MF_00381">
    <property type="entry name" value="IHF_beta"/>
    <property type="match status" value="1"/>
</dbReference>
<dbReference type="InterPro" id="IPR000119">
    <property type="entry name" value="Hist_DNA-bd"/>
</dbReference>
<dbReference type="InterPro" id="IPR010992">
    <property type="entry name" value="IHF-like_DNA-bd_dom_sf"/>
</dbReference>
<dbReference type="InterPro" id="IPR005685">
    <property type="entry name" value="IHF_beta"/>
</dbReference>
<dbReference type="NCBIfam" id="TIGR00988">
    <property type="entry name" value="hip"/>
    <property type="match status" value="1"/>
</dbReference>
<dbReference type="NCBIfam" id="NF001222">
    <property type="entry name" value="PRK00199.1"/>
    <property type="match status" value="1"/>
</dbReference>
<dbReference type="PANTHER" id="PTHR33175">
    <property type="entry name" value="DNA-BINDING PROTEIN HU"/>
    <property type="match status" value="1"/>
</dbReference>
<dbReference type="PANTHER" id="PTHR33175:SF5">
    <property type="entry name" value="INTEGRATION HOST FACTOR SUBUNIT BETA"/>
    <property type="match status" value="1"/>
</dbReference>
<dbReference type="Pfam" id="PF00216">
    <property type="entry name" value="Bac_DNA_binding"/>
    <property type="match status" value="1"/>
</dbReference>
<dbReference type="PRINTS" id="PR01727">
    <property type="entry name" value="DNABINDINGHU"/>
</dbReference>
<dbReference type="SMART" id="SM00411">
    <property type="entry name" value="BHL"/>
    <property type="match status" value="1"/>
</dbReference>
<dbReference type="SUPFAM" id="SSF47729">
    <property type="entry name" value="IHF-like DNA-binding proteins"/>
    <property type="match status" value="1"/>
</dbReference>
<evidence type="ECO:0000255" key="1">
    <source>
        <dbReference type="HAMAP-Rule" id="MF_00381"/>
    </source>
</evidence>